<feature type="chain" id="PRO_1000082991" description="Putative double-stranded DNA mimic protein YciU">
    <location>
        <begin position="1"/>
        <end position="109"/>
    </location>
</feature>
<dbReference type="EMBL" id="CP000946">
    <property type="protein sequence ID" value="ACA78015.1"/>
    <property type="molecule type" value="Genomic_DNA"/>
</dbReference>
<dbReference type="RefSeq" id="WP_000366959.1">
    <property type="nucleotide sequence ID" value="NZ_MTFT01000016.1"/>
</dbReference>
<dbReference type="SMR" id="B1ITK8"/>
<dbReference type="KEGG" id="ecl:EcolC_2380"/>
<dbReference type="HOGENOM" id="CLU_143392_0_0_6"/>
<dbReference type="Gene3D" id="3.10.450.140">
    <property type="entry name" value="dsDNA mimic, putative"/>
    <property type="match status" value="1"/>
</dbReference>
<dbReference type="HAMAP" id="MF_00680">
    <property type="entry name" value="Put_dsDNA_mimic"/>
    <property type="match status" value="1"/>
</dbReference>
<dbReference type="InterPro" id="IPR007376">
    <property type="entry name" value="dsDNA_mimic_put"/>
</dbReference>
<dbReference type="InterPro" id="IPR036763">
    <property type="entry name" value="Put_dsDNA_mimic_sf"/>
</dbReference>
<dbReference type="NCBIfam" id="NF003469">
    <property type="entry name" value="PRK05094.1"/>
    <property type="match status" value="1"/>
</dbReference>
<dbReference type="Pfam" id="PF04269">
    <property type="entry name" value="DUF440"/>
    <property type="match status" value="1"/>
</dbReference>
<dbReference type="PIRSF" id="PIRSF004916">
    <property type="entry name" value="UCP004916"/>
    <property type="match status" value="1"/>
</dbReference>
<dbReference type="SUPFAM" id="SSF102816">
    <property type="entry name" value="Putative dsDNA mimic"/>
    <property type="match status" value="1"/>
</dbReference>
<comment type="function">
    <text evidence="1">May act as a double-stranded DNA (dsDNA) mimic. Probably regulates the activity of a dsDNA-binding protein.</text>
</comment>
<comment type="similarity">
    <text evidence="1">Belongs to the putative dsDNA mimic protein family.</text>
</comment>
<name>YCIU_ECOLC</name>
<reference key="1">
    <citation type="submission" date="2008-02" db="EMBL/GenBank/DDBJ databases">
        <title>Complete sequence of Escherichia coli C str. ATCC 8739.</title>
        <authorList>
            <person name="Copeland A."/>
            <person name="Lucas S."/>
            <person name="Lapidus A."/>
            <person name="Glavina del Rio T."/>
            <person name="Dalin E."/>
            <person name="Tice H."/>
            <person name="Bruce D."/>
            <person name="Goodwin L."/>
            <person name="Pitluck S."/>
            <person name="Kiss H."/>
            <person name="Brettin T."/>
            <person name="Detter J.C."/>
            <person name="Han C."/>
            <person name="Kuske C.R."/>
            <person name="Schmutz J."/>
            <person name="Larimer F."/>
            <person name="Land M."/>
            <person name="Hauser L."/>
            <person name="Kyrpides N."/>
            <person name="Mikhailova N."/>
            <person name="Ingram L."/>
            <person name="Richardson P."/>
        </authorList>
    </citation>
    <scope>NUCLEOTIDE SEQUENCE [LARGE SCALE GENOMIC DNA]</scope>
    <source>
        <strain>ATCC 8739 / DSM 1576 / NBRC 3972 / NCIMB 8545 / WDCM 00012 / Crooks</strain>
    </source>
</reference>
<gene>
    <name evidence="1" type="primary">yciU</name>
    <name type="ordered locus">EcolC_2380</name>
</gene>
<protein>
    <recommendedName>
        <fullName evidence="1">Putative double-stranded DNA mimic protein YciU</fullName>
    </recommendedName>
</protein>
<organism>
    <name type="scientific">Escherichia coli (strain ATCC 8739 / DSM 1576 / NBRC 3972 / NCIMB 8545 / WDCM 00012 / Crooks)</name>
    <dbReference type="NCBI Taxonomy" id="481805"/>
    <lineage>
        <taxon>Bacteria</taxon>
        <taxon>Pseudomonadati</taxon>
        <taxon>Pseudomonadota</taxon>
        <taxon>Gammaproteobacteria</taxon>
        <taxon>Enterobacterales</taxon>
        <taxon>Enterobacteriaceae</taxon>
        <taxon>Escherichia</taxon>
    </lineage>
</organism>
<accession>B1ITK8</accession>
<sequence length="109" mass="12687">MDMDLNNRLTEDETLEQAYDIFLELAADNLDPADVLLFNLQFEERGGAELFDPAEDWQEHVDFDLNPDFFAEVVIGLADSEDGEINDVFARILLCREKDHKLCHIIWRE</sequence>
<evidence type="ECO:0000255" key="1">
    <source>
        <dbReference type="HAMAP-Rule" id="MF_00680"/>
    </source>
</evidence>
<proteinExistence type="inferred from homology"/>